<reference key="1">
    <citation type="journal article" date="1998" name="Science">
        <title>Genome sequence of an obligate intracellular pathogen of humans: Chlamydia trachomatis.</title>
        <authorList>
            <person name="Stephens R.S."/>
            <person name="Kalman S."/>
            <person name="Lammel C.J."/>
            <person name="Fan J."/>
            <person name="Marathe R."/>
            <person name="Aravind L."/>
            <person name="Mitchell W.P."/>
            <person name="Olinger L."/>
            <person name="Tatusov R.L."/>
            <person name="Zhao Q."/>
            <person name="Koonin E.V."/>
            <person name="Davis R.W."/>
        </authorList>
    </citation>
    <scope>NUCLEOTIDE SEQUENCE [LARGE SCALE GENOMIC DNA]</scope>
    <source>
        <strain>ATCC VR-885 / DSM 19411 / UW-3/Cx</strain>
    </source>
</reference>
<dbReference type="EMBL" id="AE001273">
    <property type="protein sequence ID" value="AAC67704.1"/>
    <property type="molecule type" value="Genomic_DNA"/>
</dbReference>
<dbReference type="PIR" id="D71555">
    <property type="entry name" value="D71555"/>
</dbReference>
<dbReference type="RefSeq" id="NP_219616.1">
    <property type="nucleotide sequence ID" value="NC_000117.1"/>
</dbReference>
<dbReference type="RefSeq" id="WP_010725067.1">
    <property type="nucleotide sequence ID" value="NC_000117.1"/>
</dbReference>
<dbReference type="SMR" id="O84115"/>
<dbReference type="STRING" id="272561.CT_113"/>
<dbReference type="EnsemblBacteria" id="AAC67704">
    <property type="protein sequence ID" value="AAC67704"/>
    <property type="gene ID" value="CT_113"/>
</dbReference>
<dbReference type="GeneID" id="884031"/>
<dbReference type="KEGG" id="ctr:CT_113"/>
<dbReference type="PATRIC" id="fig|272561.5.peg.124"/>
<dbReference type="HOGENOM" id="CLU_005070_4_0_0"/>
<dbReference type="InParanoid" id="O84115"/>
<dbReference type="OrthoDB" id="9803641at2"/>
<dbReference type="Proteomes" id="UP000000431">
    <property type="component" value="Chromosome"/>
</dbReference>
<dbReference type="GO" id="GO:0005737">
    <property type="term" value="C:cytoplasm"/>
    <property type="evidence" value="ECO:0000318"/>
    <property type="project" value="GO_Central"/>
</dbReference>
<dbReference type="GO" id="GO:0005524">
    <property type="term" value="F:ATP binding"/>
    <property type="evidence" value="ECO:0007669"/>
    <property type="project" value="UniProtKB-KW"/>
</dbReference>
<dbReference type="GO" id="GO:0016887">
    <property type="term" value="F:ATP hydrolysis activity"/>
    <property type="evidence" value="ECO:0000318"/>
    <property type="project" value="GO_Central"/>
</dbReference>
<dbReference type="GO" id="GO:0034605">
    <property type="term" value="P:cellular response to heat"/>
    <property type="evidence" value="ECO:0000318"/>
    <property type="project" value="GO_Central"/>
</dbReference>
<dbReference type="CDD" id="cd00009">
    <property type="entry name" value="AAA"/>
    <property type="match status" value="1"/>
</dbReference>
<dbReference type="CDD" id="cd19499">
    <property type="entry name" value="RecA-like_ClpB_Hsp104-like"/>
    <property type="match status" value="1"/>
</dbReference>
<dbReference type="FunFam" id="3.40.50.300:FF:000120">
    <property type="entry name" value="ATP-dependent chaperone ClpB"/>
    <property type="match status" value="1"/>
</dbReference>
<dbReference type="FunFam" id="3.40.50.300:FF:000025">
    <property type="entry name" value="ATP-dependent Clp protease subunit"/>
    <property type="match status" value="1"/>
</dbReference>
<dbReference type="FunFam" id="3.40.50.300:FF:000010">
    <property type="entry name" value="Chaperone clpB 1, putative"/>
    <property type="match status" value="1"/>
</dbReference>
<dbReference type="Gene3D" id="1.10.8.60">
    <property type="match status" value="1"/>
</dbReference>
<dbReference type="Gene3D" id="1.10.1780.10">
    <property type="entry name" value="Clp, N-terminal domain"/>
    <property type="match status" value="1"/>
</dbReference>
<dbReference type="Gene3D" id="3.40.50.300">
    <property type="entry name" value="P-loop containing nucleotide triphosphate hydrolases"/>
    <property type="match status" value="3"/>
</dbReference>
<dbReference type="InterPro" id="IPR003593">
    <property type="entry name" value="AAA+_ATPase"/>
</dbReference>
<dbReference type="InterPro" id="IPR003959">
    <property type="entry name" value="ATPase_AAA_core"/>
</dbReference>
<dbReference type="InterPro" id="IPR019489">
    <property type="entry name" value="Clp_ATPase_C"/>
</dbReference>
<dbReference type="InterPro" id="IPR036628">
    <property type="entry name" value="Clp_N_dom_sf"/>
</dbReference>
<dbReference type="InterPro" id="IPR004176">
    <property type="entry name" value="Clp_R_dom"/>
</dbReference>
<dbReference type="InterPro" id="IPR001270">
    <property type="entry name" value="ClpA/B"/>
</dbReference>
<dbReference type="InterPro" id="IPR018368">
    <property type="entry name" value="ClpA/B_CS1"/>
</dbReference>
<dbReference type="InterPro" id="IPR028299">
    <property type="entry name" value="ClpA/B_CS2"/>
</dbReference>
<dbReference type="InterPro" id="IPR041546">
    <property type="entry name" value="ClpA/ClpB_AAA_lid"/>
</dbReference>
<dbReference type="InterPro" id="IPR050130">
    <property type="entry name" value="ClpA_ClpB"/>
</dbReference>
<dbReference type="InterPro" id="IPR027417">
    <property type="entry name" value="P-loop_NTPase"/>
</dbReference>
<dbReference type="PANTHER" id="PTHR11638">
    <property type="entry name" value="ATP-DEPENDENT CLP PROTEASE"/>
    <property type="match status" value="1"/>
</dbReference>
<dbReference type="PANTHER" id="PTHR11638:SF18">
    <property type="entry name" value="HEAT SHOCK PROTEIN 104"/>
    <property type="match status" value="1"/>
</dbReference>
<dbReference type="Pfam" id="PF00004">
    <property type="entry name" value="AAA"/>
    <property type="match status" value="1"/>
</dbReference>
<dbReference type="Pfam" id="PF07724">
    <property type="entry name" value="AAA_2"/>
    <property type="match status" value="1"/>
</dbReference>
<dbReference type="Pfam" id="PF17871">
    <property type="entry name" value="AAA_lid_9"/>
    <property type="match status" value="1"/>
</dbReference>
<dbReference type="Pfam" id="PF02861">
    <property type="entry name" value="Clp_N"/>
    <property type="match status" value="2"/>
</dbReference>
<dbReference type="Pfam" id="PF10431">
    <property type="entry name" value="ClpB_D2-small"/>
    <property type="match status" value="1"/>
</dbReference>
<dbReference type="PRINTS" id="PR00300">
    <property type="entry name" value="CLPPROTEASEA"/>
</dbReference>
<dbReference type="SMART" id="SM00382">
    <property type="entry name" value="AAA"/>
    <property type="match status" value="2"/>
</dbReference>
<dbReference type="SMART" id="SM01086">
    <property type="entry name" value="ClpB_D2-small"/>
    <property type="match status" value="1"/>
</dbReference>
<dbReference type="SUPFAM" id="SSF81923">
    <property type="entry name" value="Double Clp-N motif"/>
    <property type="match status" value="1"/>
</dbReference>
<dbReference type="SUPFAM" id="SSF52540">
    <property type="entry name" value="P-loop containing nucleoside triphosphate hydrolases"/>
    <property type="match status" value="2"/>
</dbReference>
<dbReference type="PROSITE" id="PS51903">
    <property type="entry name" value="CLP_R"/>
    <property type="match status" value="1"/>
</dbReference>
<dbReference type="PROSITE" id="PS00870">
    <property type="entry name" value="CLPAB_1"/>
    <property type="match status" value="1"/>
</dbReference>
<dbReference type="PROSITE" id="PS00871">
    <property type="entry name" value="CLPAB_2"/>
    <property type="match status" value="1"/>
</dbReference>
<feature type="chain" id="PRO_0000191109" description="Chaperone protein ClpB">
    <location>
        <begin position="1"/>
        <end position="867"/>
    </location>
</feature>
<feature type="domain" description="Clp R" evidence="2">
    <location>
        <begin position="1"/>
        <end position="145"/>
    </location>
</feature>
<feature type="region of interest" description="Repeat 1" evidence="2">
    <location>
        <begin position="4"/>
        <end position="69"/>
    </location>
</feature>
<feature type="region of interest" description="Repeat 2" evidence="2">
    <location>
        <begin position="81"/>
        <end position="145"/>
    </location>
</feature>
<feature type="region of interest" description="NBD1" evidence="1">
    <location>
        <begin position="158"/>
        <end position="339"/>
    </location>
</feature>
<feature type="region of interest" description="Linker" evidence="1">
    <location>
        <begin position="340"/>
        <end position="545"/>
    </location>
</feature>
<feature type="region of interest" description="NBD2" evidence="1">
    <location>
        <begin position="555"/>
        <end position="769"/>
    </location>
</feature>
<feature type="region of interest" description="C-terminal" evidence="1">
    <location>
        <begin position="770"/>
        <end position="867"/>
    </location>
</feature>
<feature type="coiled-coil region" evidence="1">
    <location>
        <begin position="390"/>
        <end position="524"/>
    </location>
</feature>
<feature type="binding site" evidence="1">
    <location>
        <begin position="205"/>
        <end position="212"/>
    </location>
    <ligand>
        <name>ATP</name>
        <dbReference type="ChEBI" id="CHEBI:30616"/>
        <label>1</label>
    </ligand>
</feature>
<feature type="binding site" evidence="1">
    <location>
        <begin position="605"/>
        <end position="612"/>
    </location>
    <ligand>
        <name>ATP</name>
        <dbReference type="ChEBI" id="CHEBI:30616"/>
        <label>2</label>
    </ligand>
</feature>
<organism>
    <name type="scientific">Chlamydia trachomatis serovar D (strain ATCC VR-885 / DSM 19411 / UW-3/Cx)</name>
    <dbReference type="NCBI Taxonomy" id="272561"/>
    <lineage>
        <taxon>Bacteria</taxon>
        <taxon>Pseudomonadati</taxon>
        <taxon>Chlamydiota</taxon>
        <taxon>Chlamydiia</taxon>
        <taxon>Chlamydiales</taxon>
        <taxon>Chlamydiaceae</taxon>
        <taxon>Chlamydia/Chlamydophila group</taxon>
        <taxon>Chlamydia</taxon>
    </lineage>
</organism>
<comment type="function">
    <text evidence="1">Part of a stress-induced multi-chaperone system, it is involved in the recovery of the cell from heat-induced damage, in cooperation with DnaK, DnaJ and GrpE. Acts before DnaK, in the processing of protein aggregates. Protein binding stimulates the ATPase activity; ATP hydrolysis unfolds the denatured protein aggregates, which probably helps expose new hydrophobic binding sites on the surface of ClpB-bound aggregates, contributing to the solubilization and refolding of denatured protein aggregates by DnaK (By similarity).</text>
</comment>
<comment type="subunit">
    <text evidence="1">Homohexamer. The oligomerization is ATP-dependent (By similarity).</text>
</comment>
<comment type="subcellular location">
    <subcellularLocation>
        <location evidence="3">Cytoplasm</location>
    </subcellularLocation>
</comment>
<comment type="domain">
    <text evidence="1">The Clp repeat (R) domain probably functions as a substrate-discriminating domain, recruiting aggregated proteins to the ClpB hexamer and/or stabilizing bound proteins. The NBD2 domain is responsible for oligomerization, whereas the NBD1 domain stabilizes the hexamer probably in an ATP-dependent manner. The movement of the coiled-coil domain is essential for ClpB ability to rescue proteins from an aggregated state, probably by pulling apart large aggregated proteins, which are bound between the coiled-coils motifs of adjacent ClpB subunits in the functional hexamer (By similarity).</text>
</comment>
<comment type="similarity">
    <text evidence="3">Belongs to the ClpA/ClpB family.</text>
</comment>
<accession>O84115</accession>
<protein>
    <recommendedName>
        <fullName>Chaperone protein ClpB</fullName>
    </recommendedName>
</protein>
<proteinExistence type="inferred from homology"/>
<keyword id="KW-0067">ATP-binding</keyword>
<keyword id="KW-0143">Chaperone</keyword>
<keyword id="KW-0175">Coiled coil</keyword>
<keyword id="KW-0963">Cytoplasm</keyword>
<keyword id="KW-0547">Nucleotide-binding</keyword>
<keyword id="KW-1185">Reference proteome</keyword>
<keyword id="KW-0677">Repeat</keyword>
<keyword id="KW-0346">Stress response</keyword>
<sequence length="867" mass="96630">MEKFSDAVSEALEKAFELAKNSKHSYVTENHLLKSLLQNPGSLFCLVIKDVHGNLGLLTSAVDDALRREPTVVEGTAVASPSPSLQQLLLNAHQEARSMGDEYLSGDHLLLAFWRSTKEPFASWRKTVKTTSEALKELITKLRQGSRMDSPSAEENLKGLEKYCKNLTVLAREGKLDPVIGRDEEIRRTIQVLSRRTKNNPMLIGEPGVGKTAIAEGLALRIVQGDVPESLKEKHLYVLDMGALIAGAKYRGEFEERLKSVLKGVEASEGECILFIDEVHTLVGAGATDGAMDAANLLKPALARGTLHCIGATTLNEYQKYIEKDAALERRFQPIFVTEPSLEDAVFILRGLREKYEIFHGVRITEGALNAAVVLSYRYITDRFLPDKAIDLIDEAASLIRMQIGSLPLPIDEKERELSALIVKQEAIKREQAPAYQEEAEDMQKAIDRVKEELAALRLRWDEEKGLITGLKEKKNALENLKFAEEEAERTADYNRVAELRYSLIPSLEEEIHLAEEALNQRDGRLLQEEVDERLIAQVVANWTGIPVQKMLEGESEKLLVLEESLEERVVGQPFAIAAVSDSIRAARVGLSDPQRPLGVFLFLGPTGVGKTELAKALAELLFNKEEAMIRFDMTEYMEKHSVSKLIGSPPGYVGYEEGGSLSEALRRRPYSVVLFDEIEKADKEVFNILLQIFDDGILTDSKKRKVNCKNALFIMTSNIGSQELADYCTKKGTIVDKEAVLSVVAPALKNYFSPEFINRIDDILPFVPLTTEDIVKIVGIQMNRVALRLLERKISLTWDDSLVLFLSEQGYDSAFGARPLKRLIQQKVVTMLSKALLKGDIKPGMAVELTMAKDVVVFKIKTNPAV</sequence>
<gene>
    <name type="primary">clpB</name>
    <name type="ordered locus">CT_113</name>
</gene>
<evidence type="ECO:0000250" key="1"/>
<evidence type="ECO:0000255" key="2">
    <source>
        <dbReference type="PROSITE-ProRule" id="PRU01251"/>
    </source>
</evidence>
<evidence type="ECO:0000305" key="3"/>
<name>CLPB_CHLTR</name>